<comment type="function">
    <text evidence="1">Plays an essential role in the initiation and regulation of chromosomal replication. ATP-DnaA binds to the origin of replication (oriC) to initiate formation of the DNA replication initiation complex once per cell cycle. Binds the DnaA box (a 9 base pair repeat at the origin) and separates the double-stranded (ds)DNA. Forms a right-handed helical filament on oriC DNA; dsDNA binds to the exterior of the filament while single-stranded (ss)DNA is stabiized in the filament's interior. The ATP-DnaA-oriC complex binds and stabilizes one strand of the AT-rich DNA unwinding element (DUE), permitting loading of DNA polymerase. After initiation quickly degrades to an ADP-DnaA complex that is not apt for DNA replication. Binds acidic phospholipids.</text>
</comment>
<comment type="subunit">
    <text evidence="1">Oligomerizes as a right-handed, spiral filament on DNA at oriC.</text>
</comment>
<comment type="subcellular location">
    <subcellularLocation>
        <location evidence="1">Cytoplasm</location>
    </subcellularLocation>
</comment>
<comment type="domain">
    <text evidence="1">Domain I is involved in oligomerization and binding regulators, domain II is flexibile and of varying length in different bacteria, domain III forms the AAA+ region, while domain IV binds dsDNA.</text>
</comment>
<comment type="similarity">
    <text evidence="1">Belongs to the DnaA family.</text>
</comment>
<evidence type="ECO:0000255" key="1">
    <source>
        <dbReference type="HAMAP-Rule" id="MF_00377"/>
    </source>
</evidence>
<accession>B2UVS4</accession>
<gene>
    <name evidence="1" type="primary">dnaA</name>
    <name type="ordered locus">HPSH_07855</name>
</gene>
<dbReference type="EMBL" id="CP001072">
    <property type="protein sequence ID" value="ACD48956.1"/>
    <property type="molecule type" value="Genomic_DNA"/>
</dbReference>
<dbReference type="RefSeq" id="WP_000380595.1">
    <property type="nucleotide sequence ID" value="NC_010698.2"/>
</dbReference>
<dbReference type="SMR" id="B2UVS4"/>
<dbReference type="KEGG" id="hps:HPSH_07855"/>
<dbReference type="HOGENOM" id="CLU_026910_3_1_7"/>
<dbReference type="GO" id="GO:0005737">
    <property type="term" value="C:cytoplasm"/>
    <property type="evidence" value="ECO:0007669"/>
    <property type="project" value="UniProtKB-SubCell"/>
</dbReference>
<dbReference type="GO" id="GO:0005886">
    <property type="term" value="C:plasma membrane"/>
    <property type="evidence" value="ECO:0007669"/>
    <property type="project" value="TreeGrafter"/>
</dbReference>
<dbReference type="GO" id="GO:0005524">
    <property type="term" value="F:ATP binding"/>
    <property type="evidence" value="ECO:0007669"/>
    <property type="project" value="UniProtKB-UniRule"/>
</dbReference>
<dbReference type="GO" id="GO:0016887">
    <property type="term" value="F:ATP hydrolysis activity"/>
    <property type="evidence" value="ECO:0007669"/>
    <property type="project" value="InterPro"/>
</dbReference>
<dbReference type="GO" id="GO:0003688">
    <property type="term" value="F:DNA replication origin binding"/>
    <property type="evidence" value="ECO:0007669"/>
    <property type="project" value="UniProtKB-UniRule"/>
</dbReference>
<dbReference type="GO" id="GO:0008289">
    <property type="term" value="F:lipid binding"/>
    <property type="evidence" value="ECO:0007669"/>
    <property type="project" value="UniProtKB-KW"/>
</dbReference>
<dbReference type="GO" id="GO:0006270">
    <property type="term" value="P:DNA replication initiation"/>
    <property type="evidence" value="ECO:0007669"/>
    <property type="project" value="UniProtKB-UniRule"/>
</dbReference>
<dbReference type="GO" id="GO:0006275">
    <property type="term" value="P:regulation of DNA replication"/>
    <property type="evidence" value="ECO:0007669"/>
    <property type="project" value="UniProtKB-UniRule"/>
</dbReference>
<dbReference type="CDD" id="cd00009">
    <property type="entry name" value="AAA"/>
    <property type="match status" value="1"/>
</dbReference>
<dbReference type="CDD" id="cd06571">
    <property type="entry name" value="Bac_DnaA_C"/>
    <property type="match status" value="1"/>
</dbReference>
<dbReference type="FunFam" id="1.10.1750.10:FF:000007">
    <property type="entry name" value="Chromosomal replication initiator protein DnaA"/>
    <property type="match status" value="1"/>
</dbReference>
<dbReference type="FunFam" id="3.40.50.300:FF:002820">
    <property type="entry name" value="Chromosomal replication initiator protein DnaA"/>
    <property type="match status" value="1"/>
</dbReference>
<dbReference type="Gene3D" id="1.10.1750.10">
    <property type="match status" value="1"/>
</dbReference>
<dbReference type="Gene3D" id="1.10.8.60">
    <property type="match status" value="1"/>
</dbReference>
<dbReference type="Gene3D" id="3.30.300.180">
    <property type="match status" value="1"/>
</dbReference>
<dbReference type="Gene3D" id="3.40.50.300">
    <property type="entry name" value="P-loop containing nucleotide triphosphate hydrolases"/>
    <property type="match status" value="1"/>
</dbReference>
<dbReference type="HAMAP" id="MF_00377">
    <property type="entry name" value="DnaA_bact"/>
    <property type="match status" value="1"/>
</dbReference>
<dbReference type="InterPro" id="IPR003593">
    <property type="entry name" value="AAA+_ATPase"/>
</dbReference>
<dbReference type="InterPro" id="IPR001957">
    <property type="entry name" value="Chromosome_initiator_DnaA"/>
</dbReference>
<dbReference type="InterPro" id="IPR020591">
    <property type="entry name" value="Chromosome_initiator_DnaA-like"/>
</dbReference>
<dbReference type="InterPro" id="IPR018312">
    <property type="entry name" value="Chromosome_initiator_DnaA_CS"/>
</dbReference>
<dbReference type="InterPro" id="IPR013159">
    <property type="entry name" value="DnaA_C"/>
</dbReference>
<dbReference type="InterPro" id="IPR013317">
    <property type="entry name" value="DnaA_dom"/>
</dbReference>
<dbReference type="InterPro" id="IPR038454">
    <property type="entry name" value="DnaA_N_sf"/>
</dbReference>
<dbReference type="InterPro" id="IPR027417">
    <property type="entry name" value="P-loop_NTPase"/>
</dbReference>
<dbReference type="InterPro" id="IPR010921">
    <property type="entry name" value="Trp_repressor/repl_initiator"/>
</dbReference>
<dbReference type="NCBIfam" id="TIGR00362">
    <property type="entry name" value="DnaA"/>
    <property type="match status" value="1"/>
</dbReference>
<dbReference type="PANTHER" id="PTHR30050">
    <property type="entry name" value="CHROMOSOMAL REPLICATION INITIATOR PROTEIN DNAA"/>
    <property type="match status" value="1"/>
</dbReference>
<dbReference type="PANTHER" id="PTHR30050:SF2">
    <property type="entry name" value="CHROMOSOMAL REPLICATION INITIATOR PROTEIN DNAA"/>
    <property type="match status" value="1"/>
</dbReference>
<dbReference type="Pfam" id="PF00308">
    <property type="entry name" value="Bac_DnaA"/>
    <property type="match status" value="1"/>
</dbReference>
<dbReference type="Pfam" id="PF08299">
    <property type="entry name" value="Bac_DnaA_C"/>
    <property type="match status" value="1"/>
</dbReference>
<dbReference type="PRINTS" id="PR00051">
    <property type="entry name" value="DNAA"/>
</dbReference>
<dbReference type="SMART" id="SM00382">
    <property type="entry name" value="AAA"/>
    <property type="match status" value="1"/>
</dbReference>
<dbReference type="SMART" id="SM00760">
    <property type="entry name" value="Bac_DnaA_C"/>
    <property type="match status" value="1"/>
</dbReference>
<dbReference type="SUPFAM" id="SSF52540">
    <property type="entry name" value="P-loop containing nucleoside triphosphate hydrolases"/>
    <property type="match status" value="1"/>
</dbReference>
<dbReference type="SUPFAM" id="SSF48295">
    <property type="entry name" value="TrpR-like"/>
    <property type="match status" value="1"/>
</dbReference>
<dbReference type="PROSITE" id="PS01008">
    <property type="entry name" value="DNAA"/>
    <property type="match status" value="1"/>
</dbReference>
<protein>
    <recommendedName>
        <fullName evidence="1">Chromosomal replication initiator protein DnaA</fullName>
    </recommendedName>
</protein>
<keyword id="KW-0067">ATP-binding</keyword>
<keyword id="KW-0963">Cytoplasm</keyword>
<keyword id="KW-0235">DNA replication</keyword>
<keyword id="KW-0238">DNA-binding</keyword>
<keyword id="KW-0446">Lipid-binding</keyword>
<keyword id="KW-0547">Nucleotide-binding</keyword>
<feature type="chain" id="PRO_1000121987" description="Chromosomal replication initiator protein DnaA">
    <location>
        <begin position="1"/>
        <end position="455"/>
    </location>
</feature>
<feature type="region of interest" description="Domain I, interacts with DnaA modulators" evidence="1">
    <location>
        <begin position="1"/>
        <end position="75"/>
    </location>
</feature>
<feature type="region of interest" description="Domain II" evidence="1">
    <location>
        <begin position="75"/>
        <end position="106"/>
    </location>
</feature>
<feature type="region of interest" description="Domain III, AAA+ region" evidence="1">
    <location>
        <begin position="107"/>
        <end position="321"/>
    </location>
</feature>
<feature type="region of interest" description="Domain IV, binds dsDNA" evidence="1">
    <location>
        <begin position="322"/>
        <end position="455"/>
    </location>
</feature>
<feature type="binding site" evidence="1">
    <location>
        <position position="151"/>
    </location>
    <ligand>
        <name>ATP</name>
        <dbReference type="ChEBI" id="CHEBI:30616"/>
    </ligand>
</feature>
<feature type="binding site" evidence="1">
    <location>
        <position position="153"/>
    </location>
    <ligand>
        <name>ATP</name>
        <dbReference type="ChEBI" id="CHEBI:30616"/>
    </ligand>
</feature>
<feature type="binding site" evidence="1">
    <location>
        <position position="154"/>
    </location>
    <ligand>
        <name>ATP</name>
        <dbReference type="ChEBI" id="CHEBI:30616"/>
    </ligand>
</feature>
<feature type="binding site" evidence="1">
    <location>
        <position position="155"/>
    </location>
    <ligand>
        <name>ATP</name>
        <dbReference type="ChEBI" id="CHEBI:30616"/>
    </ligand>
</feature>
<proteinExistence type="inferred from homology"/>
<organism>
    <name type="scientific">Helicobacter pylori (strain Shi470)</name>
    <dbReference type="NCBI Taxonomy" id="512562"/>
    <lineage>
        <taxon>Bacteria</taxon>
        <taxon>Pseudomonadati</taxon>
        <taxon>Campylobacterota</taxon>
        <taxon>Epsilonproteobacteria</taxon>
        <taxon>Campylobacterales</taxon>
        <taxon>Helicobacteraceae</taxon>
        <taxon>Helicobacter</taxon>
    </lineage>
</organism>
<name>DNAA_HELPS</name>
<reference key="1">
    <citation type="submission" date="2008-05" db="EMBL/GenBank/DDBJ databases">
        <title>Genome sequence of Helicobacter pylori from the remote Amazon: traces of Asian ancestry of the first Americans.</title>
        <authorList>
            <person name="Kersulyte D."/>
            <person name="Kalia A."/>
            <person name="Gilman R.H."/>
            <person name="Berg D.E."/>
        </authorList>
    </citation>
    <scope>NUCLEOTIDE SEQUENCE [LARGE SCALE GENOMIC DNA]</scope>
    <source>
        <strain>Shi470</strain>
    </source>
</reference>
<sequence length="455" mass="51568">MDTNNNIEKEILALIKQKVSPIEYENCLSQLKYNPNASKSDIAFFYAPNMLLCNWITAKHGALLKEILSQNKVGMHLAHSVDVRIEVAPKIQISAQPNINYKAVKTSVKDSYTFENFVVGSCNNTVYEIAKKVAQSDTPPYNPVLFYGGTGLGKTHILNAIGNHALEKHKKVVLVTSEDFLTDFLKHLDNQTMDSFKKKYRHCDFFLLDDAQFLQGKPKLEEEFFHTFNELHANSKQIVLISDRSPKNIAGLEDRLKSRFEWGITAKVMPPDLETKLSIVKQKCQLNKITLPEEVMEYIAQHISDNIRQMEGAIIKISVNANLMNAPIDLNLAKTVLEDLQKDHAEGSSLENILLAVAQSLNLKSSEIKISSRQKNVALARKLVVYFARLYTPNPTLSLAQFLDLKDHSSISKMYSSVKKMLEEEKSPFVLSLREEIKNRLNELNDKKTAFHSSE</sequence>